<accession>Q9HAI6</accession>
<keyword id="KW-0002">3D-structure</keyword>
<keyword id="KW-0963">Cytoplasm</keyword>
<keyword id="KW-0967">Endosome</keyword>
<keyword id="KW-0391">Immunity</keyword>
<keyword id="KW-0399">Innate immunity</keyword>
<keyword id="KW-0458">Lysosome</keyword>
<keyword id="KW-0472">Membrane</keyword>
<keyword id="KW-0539">Nucleus</keyword>
<keyword id="KW-0597">Phosphoprotein</keyword>
<keyword id="KW-1267">Proteomics identification</keyword>
<keyword id="KW-1185">Reference proteome</keyword>
<feature type="chain" id="PRO_0000251252" description="TLR adapter interacting with SLC15A4 on the lysosome">
    <location>
        <begin position="1"/>
        <end position="301"/>
    </location>
</feature>
<feature type="short sequence motif" description="pLxIS motif" evidence="3">
    <location>
        <begin position="290"/>
        <end position="294"/>
    </location>
</feature>
<feature type="modified residue" description="Phosphoserine" evidence="5">
    <location>
        <position position="294"/>
    </location>
</feature>
<feature type="mutagenesis site" description="Abolished ability to activate IRF5." evidence="3">
    <original>S</original>
    <variation>A</variation>
    <location>
        <position position="294"/>
    </location>
</feature>
<feature type="mutagenesis site" description="Phosphomimetic mutant; retains ability to activate IRF5." evidence="3">
    <original>S</original>
    <variation>D</variation>
    <location>
        <position position="294"/>
    </location>
</feature>
<feature type="helix" evidence="7">
    <location>
        <begin position="4"/>
        <end position="7"/>
    </location>
</feature>
<feature type="helix" evidence="7">
    <location>
        <begin position="10"/>
        <end position="12"/>
    </location>
</feature>
<gene>
    <name evidence="4 6" type="primary">TASL</name>
    <name evidence="6" type="synonym">CXorf21</name>
</gene>
<dbReference type="EMBL" id="AK021639">
    <property type="protein sequence ID" value="BAB13860.1"/>
    <property type="molecule type" value="mRNA"/>
</dbReference>
<dbReference type="EMBL" id="BC020611">
    <property type="protein sequence ID" value="AAH20611.1"/>
    <property type="molecule type" value="mRNA"/>
</dbReference>
<dbReference type="CCDS" id="CCDS14224.1"/>
<dbReference type="RefSeq" id="NP_079435.1">
    <property type="nucleotide sequence ID" value="NM_025159.3"/>
</dbReference>
<dbReference type="PDB" id="8JZU">
    <property type="method" value="EM"/>
    <property type="resolution" value="3.05 A"/>
    <property type="chains" value="B=1-301"/>
</dbReference>
<dbReference type="PDB" id="8WX5">
    <property type="method" value="EM"/>
    <property type="resolution" value="3.91 A"/>
    <property type="chains" value="B=1-15"/>
</dbReference>
<dbReference type="PDBsum" id="8JZU"/>
<dbReference type="PDBsum" id="8WX5"/>
<dbReference type="SMR" id="Q9HAI6"/>
<dbReference type="BioGRID" id="123194">
    <property type="interactions" value="10"/>
</dbReference>
<dbReference type="FunCoup" id="Q9HAI6">
    <property type="interactions" value="259"/>
</dbReference>
<dbReference type="IntAct" id="Q9HAI6">
    <property type="interactions" value="7"/>
</dbReference>
<dbReference type="MINT" id="Q9HAI6"/>
<dbReference type="STRING" id="9606.ENSP00000368245"/>
<dbReference type="iPTMnet" id="Q9HAI6"/>
<dbReference type="PhosphoSitePlus" id="Q9HAI6"/>
<dbReference type="BioMuta" id="CXorf21"/>
<dbReference type="MassIVE" id="Q9HAI6"/>
<dbReference type="PaxDb" id="9606-ENSP00000368245"/>
<dbReference type="PeptideAtlas" id="Q9HAI6"/>
<dbReference type="Antibodypedia" id="379">
    <property type="antibodies" value="83 antibodies from 14 providers"/>
</dbReference>
<dbReference type="DNASU" id="80231"/>
<dbReference type="Ensembl" id="ENST00000378962.4">
    <property type="protein sequence ID" value="ENSP00000368245.3"/>
    <property type="gene ID" value="ENSG00000120280.6"/>
</dbReference>
<dbReference type="GeneID" id="80231"/>
<dbReference type="KEGG" id="hsa:80231"/>
<dbReference type="MANE-Select" id="ENST00000378962.4">
    <property type="protein sequence ID" value="ENSP00000368245.3"/>
    <property type="RefSeq nucleotide sequence ID" value="NM_025159.3"/>
    <property type="RefSeq protein sequence ID" value="NP_079435.1"/>
</dbReference>
<dbReference type="UCSC" id="uc004dcg.3">
    <property type="organism name" value="human"/>
</dbReference>
<dbReference type="AGR" id="HGNC:25667"/>
<dbReference type="CTD" id="80231"/>
<dbReference type="DisGeNET" id="80231"/>
<dbReference type="GeneCards" id="TASL"/>
<dbReference type="HGNC" id="HGNC:25667">
    <property type="gene designation" value="TASL"/>
</dbReference>
<dbReference type="HPA" id="ENSG00000120280">
    <property type="expression patterns" value="Tissue enhanced (bone marrow, lymphoid tissue)"/>
</dbReference>
<dbReference type="MIM" id="301049">
    <property type="type" value="gene"/>
</dbReference>
<dbReference type="neXtProt" id="NX_Q9HAI6"/>
<dbReference type="OpenTargets" id="ENSG00000120280"/>
<dbReference type="VEuPathDB" id="HostDB:ENSG00000120280"/>
<dbReference type="eggNOG" id="ENOG502QTA8">
    <property type="taxonomic scope" value="Eukaryota"/>
</dbReference>
<dbReference type="GeneTree" id="ENSGT00390000011425"/>
<dbReference type="HOGENOM" id="CLU_081014_0_0_1"/>
<dbReference type="InParanoid" id="Q9HAI6"/>
<dbReference type="OMA" id="MFHDSSP"/>
<dbReference type="OrthoDB" id="9892060at2759"/>
<dbReference type="PAN-GO" id="Q9HAI6">
    <property type="GO annotations" value="1 GO annotation based on evolutionary models"/>
</dbReference>
<dbReference type="PhylomeDB" id="Q9HAI6"/>
<dbReference type="TreeFam" id="TF335550"/>
<dbReference type="PathwayCommons" id="Q9HAI6"/>
<dbReference type="Reactome" id="R-HSA-9860276">
    <property type="pathway name" value="SLC15A4:TASL-dependent IRF5 activation"/>
</dbReference>
<dbReference type="SignaLink" id="Q9HAI6"/>
<dbReference type="BioGRID-ORCS" id="80231">
    <property type="hits" value="8 hits in 751 CRISPR screens"/>
</dbReference>
<dbReference type="ChiTaRS" id="CXorf21">
    <property type="organism name" value="human"/>
</dbReference>
<dbReference type="GenomeRNAi" id="80231"/>
<dbReference type="Pharos" id="Q9HAI6">
    <property type="development level" value="Tdark"/>
</dbReference>
<dbReference type="PRO" id="PR:Q9HAI6"/>
<dbReference type="Proteomes" id="UP000005640">
    <property type="component" value="Chromosome X"/>
</dbReference>
<dbReference type="RNAct" id="Q9HAI6">
    <property type="molecule type" value="protein"/>
</dbReference>
<dbReference type="Bgee" id="ENSG00000120280">
    <property type="expression patterns" value="Expressed in buccal mucosa cell and 192 other cell types or tissues"/>
</dbReference>
<dbReference type="GO" id="GO:0005829">
    <property type="term" value="C:cytosol"/>
    <property type="evidence" value="ECO:0000314"/>
    <property type="project" value="HPA"/>
</dbReference>
<dbReference type="GO" id="GO:0036020">
    <property type="term" value="C:endolysosome membrane"/>
    <property type="evidence" value="ECO:0000314"/>
    <property type="project" value="UniProtKB"/>
</dbReference>
<dbReference type="GO" id="GO:0043231">
    <property type="term" value="C:intracellular membrane-bounded organelle"/>
    <property type="evidence" value="ECO:0000314"/>
    <property type="project" value="HPA"/>
</dbReference>
<dbReference type="GO" id="GO:0005654">
    <property type="term" value="C:nucleoplasm"/>
    <property type="evidence" value="ECO:0000314"/>
    <property type="project" value="HPA"/>
</dbReference>
<dbReference type="GO" id="GO:0045087">
    <property type="term" value="P:innate immune response"/>
    <property type="evidence" value="ECO:0007669"/>
    <property type="project" value="UniProtKB-KW"/>
</dbReference>
<dbReference type="GO" id="GO:0045089">
    <property type="term" value="P:positive regulation of innate immune response"/>
    <property type="evidence" value="ECO:0000314"/>
    <property type="project" value="UniProtKB"/>
</dbReference>
<dbReference type="GO" id="GO:0034157">
    <property type="term" value="P:positive regulation of toll-like receptor 7 signaling pathway"/>
    <property type="evidence" value="ECO:0000315"/>
    <property type="project" value="UniProtKB"/>
</dbReference>
<dbReference type="GO" id="GO:0034161">
    <property type="term" value="P:positive regulation of toll-like receptor 8 signaling pathway"/>
    <property type="evidence" value="ECO:0000315"/>
    <property type="project" value="UniProtKB"/>
</dbReference>
<dbReference type="GO" id="GO:0035751">
    <property type="term" value="P:regulation of lysosomal lumen pH"/>
    <property type="evidence" value="ECO:0000314"/>
    <property type="project" value="UniProtKB"/>
</dbReference>
<dbReference type="GO" id="GO:0034121">
    <property type="term" value="P:regulation of toll-like receptor signaling pathway"/>
    <property type="evidence" value="ECO:0007669"/>
    <property type="project" value="InterPro"/>
</dbReference>
<dbReference type="InterPro" id="IPR027869">
    <property type="entry name" value="TASL"/>
</dbReference>
<dbReference type="PANTHER" id="PTHR14889">
    <property type="entry name" value="RCG36411"/>
    <property type="match status" value="1"/>
</dbReference>
<dbReference type="PANTHER" id="PTHR14889:SF3">
    <property type="entry name" value="TLR ADAPTER INTERACTING WITH SLC15A4 ON THE LYSOSOME"/>
    <property type="match status" value="1"/>
</dbReference>
<dbReference type="Pfam" id="PF15133">
    <property type="entry name" value="TASL"/>
    <property type="match status" value="1"/>
</dbReference>
<evidence type="ECO:0000269" key="1">
    <source>
    </source>
</evidence>
<evidence type="ECO:0000269" key="2">
    <source>
    </source>
</evidence>
<evidence type="ECO:0000269" key="3">
    <source>
    </source>
</evidence>
<evidence type="ECO:0000303" key="4">
    <source>
    </source>
</evidence>
<evidence type="ECO:0000305" key="5">
    <source>
    </source>
</evidence>
<evidence type="ECO:0000312" key="6">
    <source>
        <dbReference type="HGNC" id="HGNC:25667"/>
    </source>
</evidence>
<evidence type="ECO:0007829" key="7">
    <source>
        <dbReference type="PDB" id="8JZU"/>
    </source>
</evidence>
<reference key="1">
    <citation type="journal article" date="2004" name="Nat. Genet.">
        <title>Complete sequencing and characterization of 21,243 full-length human cDNAs.</title>
        <authorList>
            <person name="Ota T."/>
            <person name="Suzuki Y."/>
            <person name="Nishikawa T."/>
            <person name="Otsuki T."/>
            <person name="Sugiyama T."/>
            <person name="Irie R."/>
            <person name="Wakamatsu A."/>
            <person name="Hayashi K."/>
            <person name="Sato H."/>
            <person name="Nagai K."/>
            <person name="Kimura K."/>
            <person name="Makita H."/>
            <person name="Sekine M."/>
            <person name="Obayashi M."/>
            <person name="Nishi T."/>
            <person name="Shibahara T."/>
            <person name="Tanaka T."/>
            <person name="Ishii S."/>
            <person name="Yamamoto J."/>
            <person name="Saito K."/>
            <person name="Kawai Y."/>
            <person name="Isono Y."/>
            <person name="Nakamura Y."/>
            <person name="Nagahari K."/>
            <person name="Murakami K."/>
            <person name="Yasuda T."/>
            <person name="Iwayanagi T."/>
            <person name="Wagatsuma M."/>
            <person name="Shiratori A."/>
            <person name="Sudo H."/>
            <person name="Hosoiri T."/>
            <person name="Kaku Y."/>
            <person name="Kodaira H."/>
            <person name="Kondo H."/>
            <person name="Sugawara M."/>
            <person name="Takahashi M."/>
            <person name="Kanda K."/>
            <person name="Yokoi T."/>
            <person name="Furuya T."/>
            <person name="Kikkawa E."/>
            <person name="Omura Y."/>
            <person name="Abe K."/>
            <person name="Kamihara K."/>
            <person name="Katsuta N."/>
            <person name="Sato K."/>
            <person name="Tanikawa M."/>
            <person name="Yamazaki M."/>
            <person name="Ninomiya K."/>
            <person name="Ishibashi T."/>
            <person name="Yamashita H."/>
            <person name="Murakawa K."/>
            <person name="Fujimori K."/>
            <person name="Tanai H."/>
            <person name="Kimata M."/>
            <person name="Watanabe M."/>
            <person name="Hiraoka S."/>
            <person name="Chiba Y."/>
            <person name="Ishida S."/>
            <person name="Ono Y."/>
            <person name="Takiguchi S."/>
            <person name="Watanabe S."/>
            <person name="Yosida M."/>
            <person name="Hotuta T."/>
            <person name="Kusano J."/>
            <person name="Kanehori K."/>
            <person name="Takahashi-Fujii A."/>
            <person name="Hara H."/>
            <person name="Tanase T.-O."/>
            <person name="Nomura Y."/>
            <person name="Togiya S."/>
            <person name="Komai F."/>
            <person name="Hara R."/>
            <person name="Takeuchi K."/>
            <person name="Arita M."/>
            <person name="Imose N."/>
            <person name="Musashino K."/>
            <person name="Yuuki H."/>
            <person name="Oshima A."/>
            <person name="Sasaki N."/>
            <person name="Aotsuka S."/>
            <person name="Yoshikawa Y."/>
            <person name="Matsunawa H."/>
            <person name="Ichihara T."/>
            <person name="Shiohata N."/>
            <person name="Sano S."/>
            <person name="Moriya S."/>
            <person name="Momiyama H."/>
            <person name="Satoh N."/>
            <person name="Takami S."/>
            <person name="Terashima Y."/>
            <person name="Suzuki O."/>
            <person name="Nakagawa S."/>
            <person name="Senoh A."/>
            <person name="Mizoguchi H."/>
            <person name="Goto Y."/>
            <person name="Shimizu F."/>
            <person name="Wakebe H."/>
            <person name="Hishigaki H."/>
            <person name="Watanabe T."/>
            <person name="Sugiyama A."/>
            <person name="Takemoto M."/>
            <person name="Kawakami B."/>
            <person name="Yamazaki M."/>
            <person name="Watanabe K."/>
            <person name="Kumagai A."/>
            <person name="Itakura S."/>
            <person name="Fukuzumi Y."/>
            <person name="Fujimori Y."/>
            <person name="Komiyama M."/>
            <person name="Tashiro H."/>
            <person name="Tanigami A."/>
            <person name="Fujiwara T."/>
            <person name="Ono T."/>
            <person name="Yamada K."/>
            <person name="Fujii Y."/>
            <person name="Ozaki K."/>
            <person name="Hirao M."/>
            <person name="Ohmori Y."/>
            <person name="Kawabata A."/>
            <person name="Hikiji T."/>
            <person name="Kobatake N."/>
            <person name="Inagaki H."/>
            <person name="Ikema Y."/>
            <person name="Okamoto S."/>
            <person name="Okitani R."/>
            <person name="Kawakami T."/>
            <person name="Noguchi S."/>
            <person name="Itoh T."/>
            <person name="Shigeta K."/>
            <person name="Senba T."/>
            <person name="Matsumura K."/>
            <person name="Nakajima Y."/>
            <person name="Mizuno T."/>
            <person name="Morinaga M."/>
            <person name="Sasaki M."/>
            <person name="Togashi T."/>
            <person name="Oyama M."/>
            <person name="Hata H."/>
            <person name="Watanabe M."/>
            <person name="Komatsu T."/>
            <person name="Mizushima-Sugano J."/>
            <person name="Satoh T."/>
            <person name="Shirai Y."/>
            <person name="Takahashi Y."/>
            <person name="Nakagawa K."/>
            <person name="Okumura K."/>
            <person name="Nagase T."/>
            <person name="Nomura N."/>
            <person name="Kikuchi H."/>
            <person name="Masuho Y."/>
            <person name="Yamashita R."/>
            <person name="Nakai K."/>
            <person name="Yada T."/>
            <person name="Nakamura Y."/>
            <person name="Ohara O."/>
            <person name="Isogai T."/>
            <person name="Sugano S."/>
        </authorList>
    </citation>
    <scope>NUCLEOTIDE SEQUENCE [LARGE SCALE MRNA]</scope>
    <source>
        <tissue>Embryo</tissue>
    </source>
</reference>
<reference key="2">
    <citation type="journal article" date="2004" name="Genome Res.">
        <title>The status, quality, and expansion of the NIH full-length cDNA project: the Mammalian Gene Collection (MGC).</title>
        <authorList>
            <consortium name="The MGC Project Team"/>
        </authorList>
    </citation>
    <scope>NUCLEOTIDE SEQUENCE [LARGE SCALE MRNA]</scope>
    <source>
        <tissue>Placenta</tissue>
    </source>
</reference>
<reference key="3">
    <citation type="journal article" date="2019" name="Front. Immunol.">
        <title>Lysosomal pH Is Regulated in a Sex Dependent Manner in Immune Cells Expressing CXorf21.</title>
        <authorList>
            <person name="Harris V.M."/>
            <person name="Harley I.T.W."/>
            <person name="Kurien B.T."/>
            <person name="Koelsch K.A."/>
            <person name="Scofield R.H."/>
        </authorList>
    </citation>
    <scope>FUNCTION</scope>
    <scope>INDUCTION</scope>
    <scope>TISSUE SPECIFICITY</scope>
    <scope>INVOLVEMENT IN DISEASE</scope>
</reference>
<reference key="4">
    <citation type="journal article" date="2019" name="Nat. Commun.">
        <title>Interferon inducible X-linked gene CXorf21 may contribute to sexual dimorphism in Systemic Lupus Erythematosus.</title>
        <authorList>
            <person name="Odhams C.A."/>
            <person name="Roberts A.L."/>
            <person name="Vester S.K."/>
            <person name="Duarte C.S.T."/>
            <person name="Beales C.T."/>
            <person name="Clarke A.J."/>
            <person name="Lindinger S."/>
            <person name="Daffern S.J."/>
            <person name="Zito A."/>
            <person name="Chen L."/>
            <person name="Jones L.L."/>
            <person name="Boteva L."/>
            <person name="Morris D.L."/>
            <person name="Small K.S."/>
            <person name="Fernando M.M.A."/>
            <person name="Cunninghame Graham D.S."/>
            <person name="Vyse T.J."/>
        </authorList>
    </citation>
    <scope>INDUCTION</scope>
    <scope>SUBCELLULAR LOCATION</scope>
    <scope>TISSUE SPECIFICITY</scope>
    <scope>INVOLVEMENT IN DISEASE</scope>
</reference>
<reference key="5">
    <citation type="journal article" date="2020" name="Nature">
        <title>TASL is the SLC15A4-associated adaptor for IRF5 activation by TLR7-9.</title>
        <authorList>
            <person name="Heinz L.X."/>
            <person name="Lee J."/>
            <person name="Kapoor U."/>
            <person name="Kartnig F."/>
            <person name="Sedlyarov V."/>
            <person name="Papakostas K."/>
            <person name="Cesar-Razquin A."/>
            <person name="Essletzbichler P."/>
            <person name="Goldmann U."/>
            <person name="Stefanovic A."/>
            <person name="Bigenzahn J.W."/>
            <person name="Scorzoni S."/>
            <person name="Pizzagalli M.D."/>
            <person name="Bensimon A."/>
            <person name="Mueller A.C."/>
            <person name="King F.J."/>
            <person name="Li J."/>
            <person name="Girardi E."/>
            <person name="Mbow M.L."/>
            <person name="Whitehurst C.E."/>
            <person name="Rebsamen M."/>
            <person name="Superti-Furga G."/>
        </authorList>
    </citation>
    <scope>FUNCTION</scope>
    <scope>SUBCELLULAR LOCATION</scope>
    <scope>INTERACTION WITH IRF5 AND SLC15A4</scope>
    <scope>PHOSPHORYLATION AT SER-294</scope>
    <scope>MUTAGENESIS OF SER-294</scope>
</reference>
<name>TASL_HUMAN</name>
<sequence length="301" mass="33894">MLSEGYLSGLEYWNDIHWSCASYNEQVAGEKEEETNSVATLSYSSVDETQVRSLYVSCKSSGKFISSVHSRESQHSRSQRVTVLQTNPNPVFESPNLAAVEICRDASRETYLVPSSCKSICKNYNDLQIAGGQVMAINSVTTDFPSESSFEYGPLLKSSEIPLPMEDSISTQPSDFPQKPIQRYSSYWRITSIKEKSSLQMQNPISNAVLNEYLEQKVVELYKQYIMDTVFHDSSPTQILASELIMTSVDQISLQVSREKNLETSKARDIVFSRLLQLMSTEITEISTPSLHISQYSNVNP</sequence>
<organism>
    <name type="scientific">Homo sapiens</name>
    <name type="common">Human</name>
    <dbReference type="NCBI Taxonomy" id="9606"/>
    <lineage>
        <taxon>Eukaryota</taxon>
        <taxon>Metazoa</taxon>
        <taxon>Chordata</taxon>
        <taxon>Craniata</taxon>
        <taxon>Vertebrata</taxon>
        <taxon>Euteleostomi</taxon>
        <taxon>Mammalia</taxon>
        <taxon>Eutheria</taxon>
        <taxon>Euarchontoglires</taxon>
        <taxon>Primates</taxon>
        <taxon>Haplorrhini</taxon>
        <taxon>Catarrhini</taxon>
        <taxon>Hominidae</taxon>
        <taxon>Homo</taxon>
    </lineage>
</organism>
<protein>
    <recommendedName>
        <fullName evidence="4">TLR adapter interacting with SLC15A4 on the lysosome</fullName>
    </recommendedName>
</protein>
<proteinExistence type="evidence at protein level"/>
<comment type="function">
    <text evidence="1 3">Innate immune adapter that mediates the recruitment and activation of IRF5 downstream of endolysosomal toll-like receptors TLR7, TLR8 and TLR9 (PubMed:32433612). Following recruitment to endolysosome by SLC15A4 downstream of TLR7, TLR8 and TLR9, specifically recruits IRF5 transcription factor via its pLxIS motif, leading to IRF5 activation and subsequent expression of type I interferons (PubMed:32433612). Plays a role in the regulation of endolysosomal pH in immune cells such as B-cells, dendritic cells and monocytes (PubMed:31001245).</text>
</comment>
<comment type="subunit">
    <text evidence="3">Interacts (via pLxIS motif) with IRF5; leading to IRF5 activation (PubMed:32433612). Interacts with SLC15A4; leading to its recruitment to endolysosome (PubMed:32433612).</text>
</comment>
<comment type="interaction">
    <interactant intactId="EBI-21895669">
        <id>Q9HAI6</id>
    </interactant>
    <interactant intactId="EBI-4319594">
        <id>Q8N697</id>
        <label>SLC15A4</label>
    </interactant>
    <organismsDiffer>false</organismsDiffer>
    <experiments>15</experiments>
</comment>
<comment type="subcellular location">
    <subcellularLocation>
        <location evidence="2 3">Lysosome membrane</location>
    </subcellularLocation>
    <subcellularLocation>
        <location evidence="3">Endosome membrane</location>
    </subcellularLocation>
    <subcellularLocation>
        <location evidence="2">Nucleus</location>
    </subcellularLocation>
    <subcellularLocation>
        <location evidence="2">Cytoplasm</location>
    </subcellularLocation>
    <text evidence="2 3">Recruited to endolysosome following interaction with SLC15A4 (PubMed:32433612). May colocalize with TLR7 in the endosomal pathway (PubMed:31092820).</text>
</comment>
<comment type="tissue specificity">
    <text evidence="1 2">Highly expressed in immune cell types such as B-cells, neutrophils, dendritic cells and monocytes, the expression levels are two-three-fold higher in female cells compared to male cells (at protein level) (PubMed:31001245, PubMed:31092820). Expressed at low levels in T-cells and NK cells (PubMed:31001245).</text>
</comment>
<comment type="induction">
    <text evidence="1 2">Escape from X chromosome inactivation results in an increased expression in females (PubMed:31001245, PubMed:31092820). In monocytes and B cells, induced by type I and type II interferons as well as LPS (PubMed:31092820).</text>
</comment>
<comment type="domain">
    <text evidence="3">The pLxIS motif constitutes an IRF5-binding motif: following phosphorylation, the phosphorylated pLxIS motif of TASL recruits IRF5.</text>
</comment>
<comment type="PTM">
    <text evidence="5">The phosphorylated pLxIS motif constitutes an IRF5-binding motif, leading to recruitment of the transcription factor IRF5 to induce type-I interferons and other cytokines.</text>
</comment>
<comment type="disease">
    <text evidence="1 2">Some alleles may be associated with systemic lupus erythematosus (SLE); a chronic, relapsing, inflammatory, and often febrile multisystemic disorder of connective tissue, characterized principally by involvement of the skin, joints, kidneys and serosal membranes. It is of unknown etiology, but is thought to represent a failure of the regulatory mechanisms of the autoimmune system. Because it evades X-chromosome inactivation, its expression is increased in female immune cells which may be involved to SLE striking sex imbalance towards females.</text>
</comment>